<name>RL16_NITSB</name>
<evidence type="ECO:0000255" key="1">
    <source>
        <dbReference type="HAMAP-Rule" id="MF_01342"/>
    </source>
</evidence>
<evidence type="ECO:0000256" key="2">
    <source>
        <dbReference type="SAM" id="MobiDB-lite"/>
    </source>
</evidence>
<evidence type="ECO:0000305" key="3"/>
<sequence>MLMPKKTKYRKQQKGRNRGKAYNGNSLAFGTIGIKALEHGRIDSRQIEAARVAMTRKVKRTGKIWIRVFPDKPLTKKPLETRMGKGKGSVEKWVMNIKPGRIIYEMAGVEESLAREALDLARYKLPFKTKIVTQESENEIY</sequence>
<proteinExistence type="inferred from homology"/>
<reference key="1">
    <citation type="journal article" date="2007" name="Proc. Natl. Acad. Sci. U.S.A.">
        <title>Deep-sea vent epsilon-proteobacterial genomes provide insights into emergence of pathogens.</title>
        <authorList>
            <person name="Nakagawa S."/>
            <person name="Takaki Y."/>
            <person name="Shimamura S."/>
            <person name="Reysenbach A.-L."/>
            <person name="Takai K."/>
            <person name="Horikoshi K."/>
        </authorList>
    </citation>
    <scope>NUCLEOTIDE SEQUENCE [LARGE SCALE GENOMIC DNA]</scope>
    <source>
        <strain>SB155-2</strain>
    </source>
</reference>
<feature type="chain" id="PRO_1000054663" description="Large ribosomal subunit protein uL16">
    <location>
        <begin position="1"/>
        <end position="141"/>
    </location>
</feature>
<feature type="region of interest" description="Disordered" evidence="2">
    <location>
        <begin position="1"/>
        <end position="22"/>
    </location>
</feature>
<feature type="compositionally biased region" description="Basic residues" evidence="2">
    <location>
        <begin position="1"/>
        <end position="19"/>
    </location>
</feature>
<accession>A6Q1I5</accession>
<organism>
    <name type="scientific">Nitratiruptor sp. (strain SB155-2)</name>
    <dbReference type="NCBI Taxonomy" id="387092"/>
    <lineage>
        <taxon>Bacteria</taxon>
        <taxon>Pseudomonadati</taxon>
        <taxon>Campylobacterota</taxon>
        <taxon>Epsilonproteobacteria</taxon>
        <taxon>Nautiliales</taxon>
        <taxon>Nitratiruptoraceae</taxon>
        <taxon>Nitratiruptor</taxon>
    </lineage>
</organism>
<dbReference type="EMBL" id="AP009178">
    <property type="protein sequence ID" value="BAF69344.1"/>
    <property type="molecule type" value="Genomic_DNA"/>
</dbReference>
<dbReference type="RefSeq" id="WP_012081607.1">
    <property type="nucleotide sequence ID" value="NC_009662.1"/>
</dbReference>
<dbReference type="SMR" id="A6Q1I5"/>
<dbReference type="FunCoup" id="A6Q1I5">
    <property type="interactions" value="479"/>
</dbReference>
<dbReference type="STRING" id="387092.NIS_0230"/>
<dbReference type="KEGG" id="nis:NIS_0230"/>
<dbReference type="eggNOG" id="COG0197">
    <property type="taxonomic scope" value="Bacteria"/>
</dbReference>
<dbReference type="HOGENOM" id="CLU_078858_2_1_7"/>
<dbReference type="InParanoid" id="A6Q1I5"/>
<dbReference type="OrthoDB" id="9802589at2"/>
<dbReference type="Proteomes" id="UP000001118">
    <property type="component" value="Chromosome"/>
</dbReference>
<dbReference type="GO" id="GO:0022625">
    <property type="term" value="C:cytosolic large ribosomal subunit"/>
    <property type="evidence" value="ECO:0007669"/>
    <property type="project" value="TreeGrafter"/>
</dbReference>
<dbReference type="GO" id="GO:0019843">
    <property type="term" value="F:rRNA binding"/>
    <property type="evidence" value="ECO:0007669"/>
    <property type="project" value="UniProtKB-UniRule"/>
</dbReference>
<dbReference type="GO" id="GO:0003735">
    <property type="term" value="F:structural constituent of ribosome"/>
    <property type="evidence" value="ECO:0007669"/>
    <property type="project" value="InterPro"/>
</dbReference>
<dbReference type="GO" id="GO:0000049">
    <property type="term" value="F:tRNA binding"/>
    <property type="evidence" value="ECO:0007669"/>
    <property type="project" value="UniProtKB-KW"/>
</dbReference>
<dbReference type="GO" id="GO:0006412">
    <property type="term" value="P:translation"/>
    <property type="evidence" value="ECO:0007669"/>
    <property type="project" value="UniProtKB-UniRule"/>
</dbReference>
<dbReference type="CDD" id="cd01433">
    <property type="entry name" value="Ribosomal_L16_L10e"/>
    <property type="match status" value="1"/>
</dbReference>
<dbReference type="FunFam" id="3.90.1170.10:FF:000001">
    <property type="entry name" value="50S ribosomal protein L16"/>
    <property type="match status" value="1"/>
</dbReference>
<dbReference type="Gene3D" id="3.90.1170.10">
    <property type="entry name" value="Ribosomal protein L10e/L16"/>
    <property type="match status" value="1"/>
</dbReference>
<dbReference type="HAMAP" id="MF_01342">
    <property type="entry name" value="Ribosomal_uL16"/>
    <property type="match status" value="1"/>
</dbReference>
<dbReference type="InterPro" id="IPR047873">
    <property type="entry name" value="Ribosomal_uL16"/>
</dbReference>
<dbReference type="InterPro" id="IPR000114">
    <property type="entry name" value="Ribosomal_uL16_bact-type"/>
</dbReference>
<dbReference type="InterPro" id="IPR020798">
    <property type="entry name" value="Ribosomal_uL16_CS"/>
</dbReference>
<dbReference type="InterPro" id="IPR016180">
    <property type="entry name" value="Ribosomal_uL16_dom"/>
</dbReference>
<dbReference type="InterPro" id="IPR036920">
    <property type="entry name" value="Ribosomal_uL16_sf"/>
</dbReference>
<dbReference type="NCBIfam" id="TIGR01164">
    <property type="entry name" value="rplP_bact"/>
    <property type="match status" value="1"/>
</dbReference>
<dbReference type="PANTHER" id="PTHR12220">
    <property type="entry name" value="50S/60S RIBOSOMAL PROTEIN L16"/>
    <property type="match status" value="1"/>
</dbReference>
<dbReference type="PANTHER" id="PTHR12220:SF13">
    <property type="entry name" value="LARGE RIBOSOMAL SUBUNIT PROTEIN UL16M"/>
    <property type="match status" value="1"/>
</dbReference>
<dbReference type="Pfam" id="PF00252">
    <property type="entry name" value="Ribosomal_L16"/>
    <property type="match status" value="1"/>
</dbReference>
<dbReference type="PRINTS" id="PR00060">
    <property type="entry name" value="RIBOSOMALL16"/>
</dbReference>
<dbReference type="SUPFAM" id="SSF54686">
    <property type="entry name" value="Ribosomal protein L16p/L10e"/>
    <property type="match status" value="1"/>
</dbReference>
<dbReference type="PROSITE" id="PS00586">
    <property type="entry name" value="RIBOSOMAL_L16_1"/>
    <property type="match status" value="1"/>
</dbReference>
<dbReference type="PROSITE" id="PS00701">
    <property type="entry name" value="RIBOSOMAL_L16_2"/>
    <property type="match status" value="1"/>
</dbReference>
<protein>
    <recommendedName>
        <fullName evidence="1">Large ribosomal subunit protein uL16</fullName>
    </recommendedName>
    <alternativeName>
        <fullName evidence="3">50S ribosomal protein L16</fullName>
    </alternativeName>
</protein>
<comment type="function">
    <text evidence="1">Binds 23S rRNA and is also seen to make contacts with the A and possibly P site tRNAs.</text>
</comment>
<comment type="subunit">
    <text evidence="1">Part of the 50S ribosomal subunit.</text>
</comment>
<comment type="similarity">
    <text evidence="1">Belongs to the universal ribosomal protein uL16 family.</text>
</comment>
<keyword id="KW-1185">Reference proteome</keyword>
<keyword id="KW-0687">Ribonucleoprotein</keyword>
<keyword id="KW-0689">Ribosomal protein</keyword>
<keyword id="KW-0694">RNA-binding</keyword>
<keyword id="KW-0699">rRNA-binding</keyword>
<keyword id="KW-0820">tRNA-binding</keyword>
<gene>
    <name evidence="1" type="primary">rplP</name>
    <name type="ordered locus">NIS_0230</name>
</gene>